<proteinExistence type="evidence at transcript level"/>
<evidence type="ECO:0000250" key="1">
    <source>
        <dbReference type="UniProtKB" id="P68363"/>
    </source>
</evidence>
<evidence type="ECO:0000250" key="2">
    <source>
        <dbReference type="UniProtKB" id="Q13509"/>
    </source>
</evidence>
<evidence type="ECO:0000256" key="3">
    <source>
        <dbReference type="SAM" id="MobiDB-lite"/>
    </source>
</evidence>
<evidence type="ECO:0000305" key="4"/>
<comment type="function">
    <text>Tubulin is the major constituent of microtubules, a cylinder consisting of laterally associated linear protofilaments composed of alpha- and beta-tubulin heterodimers. Microtubules grow by the addition of GTP-tubulin dimers to the microtubule end, where a stabilizing cap forms. Below the cap, tubulin dimers are in GDP-bound state, owing to GTPase activity of alpha-tubulin.</text>
</comment>
<comment type="cofactor">
    <cofactor evidence="1">
        <name>Mg(2+)</name>
        <dbReference type="ChEBI" id="CHEBI:18420"/>
    </cofactor>
</comment>
<comment type="subunit">
    <text>Dimer of alpha and beta chains. A typical microtubule is a hollow water-filled tube with an outer diameter of 25 nm and an inner diameter of 15 nM. Alpha-beta heterodimers associate head-to-tail to form protofilaments running lengthwise along the microtubule wall with the beta-tubulin subunit facing the microtubule plus end conferring a structural polarity. Microtubules usually have 13 protofilaments but different protofilament numbers can be found in some organisms and specialized cells.</text>
</comment>
<comment type="subcellular location">
    <subcellularLocation>
        <location>Cytoplasm</location>
        <location>Cytoskeleton</location>
    </subcellularLocation>
</comment>
<comment type="similarity">
    <text evidence="4">Belongs to the tubulin family.</text>
</comment>
<sequence>MREILHIQGGQCGNQIGAKFWEVVCDEHGIDPTGRYTGTSDLQLERVNVYYNEASCGRFVPRAVLMDLEPGTMDSVRTGPYGQIFRPDNFVFGQSGAGNNWAKGHYTEGAELIDSVLDVVRKEAENCDCLQGFQVCHSLGGGTGSGMGTLLISKIREEYPDRMMLTFSVFPSPKVSDTVVEPYNATLSVHQLVENADECMVLDNEALYDICFRTLKLTTPSFGDLNHLISATMSGVTCCLRFPGQLNSDLRKLAVNLIPFPRLHFFMVGFAPLTSRGSQQYRALTVPELTQQMWDAKNMMCAADPRHGRYLTASAMFRGKMSTKEVDEQMINVQNKNSSYFVEWIPNNVKSSVCDIPPTGLSMASTFVGNSTSIQEMFRRVSEQFTAMFRRKAFLHWYTGEGMDEMEFTEAESNMNDLVSEYQQYQDATADEEGEYEDEDQEAEDDM</sequence>
<feature type="chain" id="PRO_0000048352" description="Tubulin beta chain">
    <location>
        <begin position="1"/>
        <end position="447"/>
    </location>
</feature>
<feature type="region of interest" description="Disordered" evidence="3">
    <location>
        <begin position="419"/>
        <end position="447"/>
    </location>
</feature>
<feature type="compositionally biased region" description="Acidic residues" evidence="3">
    <location>
        <begin position="429"/>
        <end position="447"/>
    </location>
</feature>
<feature type="binding site" evidence="2">
    <location>
        <position position="11"/>
    </location>
    <ligand>
        <name>GTP</name>
        <dbReference type="ChEBI" id="CHEBI:37565"/>
    </ligand>
</feature>
<feature type="binding site" evidence="1">
    <location>
        <position position="69"/>
    </location>
    <ligand>
        <name>GTP</name>
        <dbReference type="ChEBI" id="CHEBI:37565"/>
    </ligand>
</feature>
<feature type="binding site" evidence="1">
    <location>
        <position position="69"/>
    </location>
    <ligand>
        <name>Mg(2+)</name>
        <dbReference type="ChEBI" id="CHEBI:18420"/>
    </ligand>
</feature>
<feature type="binding site" evidence="2">
    <location>
        <position position="138"/>
    </location>
    <ligand>
        <name>GTP</name>
        <dbReference type="ChEBI" id="CHEBI:37565"/>
    </ligand>
</feature>
<feature type="binding site" evidence="2">
    <location>
        <position position="142"/>
    </location>
    <ligand>
        <name>GTP</name>
        <dbReference type="ChEBI" id="CHEBI:37565"/>
    </ligand>
</feature>
<feature type="binding site" evidence="2">
    <location>
        <position position="143"/>
    </location>
    <ligand>
        <name>GTP</name>
        <dbReference type="ChEBI" id="CHEBI:37565"/>
    </ligand>
</feature>
<feature type="binding site" evidence="2">
    <location>
        <position position="144"/>
    </location>
    <ligand>
        <name>GTP</name>
        <dbReference type="ChEBI" id="CHEBI:37565"/>
    </ligand>
</feature>
<feature type="binding site" evidence="2">
    <location>
        <position position="204"/>
    </location>
    <ligand>
        <name>GTP</name>
        <dbReference type="ChEBI" id="CHEBI:37565"/>
    </ligand>
</feature>
<feature type="binding site" evidence="2">
    <location>
        <position position="226"/>
    </location>
    <ligand>
        <name>GTP</name>
        <dbReference type="ChEBI" id="CHEBI:37565"/>
    </ligand>
</feature>
<gene>
    <name type="primary">TUBB</name>
</gene>
<protein>
    <recommendedName>
        <fullName>Tubulin beta chain</fullName>
    </recommendedName>
    <alternativeName>
        <fullName>Beta-tubulin</fullName>
    </alternativeName>
</protein>
<keyword id="KW-0963">Cytoplasm</keyword>
<keyword id="KW-0206">Cytoskeleton</keyword>
<keyword id="KW-0342">GTP-binding</keyword>
<keyword id="KW-0460">Magnesium</keyword>
<keyword id="KW-0479">Metal-binding</keyword>
<keyword id="KW-0493">Microtubule</keyword>
<keyword id="KW-0547">Nucleotide-binding</keyword>
<organism>
    <name type="scientific">Hordeum vulgare</name>
    <name type="common">Barley</name>
    <dbReference type="NCBI Taxonomy" id="4513"/>
    <lineage>
        <taxon>Eukaryota</taxon>
        <taxon>Viridiplantae</taxon>
        <taxon>Streptophyta</taxon>
        <taxon>Embryophyta</taxon>
        <taxon>Tracheophyta</taxon>
        <taxon>Spermatophyta</taxon>
        <taxon>Magnoliopsida</taxon>
        <taxon>Liliopsida</taxon>
        <taxon>Poales</taxon>
        <taxon>Poaceae</taxon>
        <taxon>BOP clade</taxon>
        <taxon>Pooideae</taxon>
        <taxon>Triticodae</taxon>
        <taxon>Triticeae</taxon>
        <taxon>Hordeinae</taxon>
        <taxon>Hordeum</taxon>
    </lineage>
</organism>
<reference key="1">
    <citation type="submission" date="1996-12" db="EMBL/GenBank/DDBJ databases">
        <authorList>
            <person name="Schroeder J."/>
            <person name="Wernicke W."/>
        </authorList>
    </citation>
    <scope>NUCLEOTIDE SEQUENCE [MRNA]</scope>
    <source>
        <strain>cv. Igri</strain>
        <tissue>Leaf</tissue>
    </source>
</reference>
<dbReference type="EMBL" id="Y09741">
    <property type="protein sequence ID" value="CAA70891.1"/>
    <property type="molecule type" value="mRNA"/>
</dbReference>
<dbReference type="SMR" id="P93176"/>
<dbReference type="ExpressionAtlas" id="P93176">
    <property type="expression patterns" value="baseline and differential"/>
</dbReference>
<dbReference type="GO" id="GO:0005737">
    <property type="term" value="C:cytoplasm"/>
    <property type="evidence" value="ECO:0007669"/>
    <property type="project" value="UniProtKB-KW"/>
</dbReference>
<dbReference type="GO" id="GO:0005874">
    <property type="term" value="C:microtubule"/>
    <property type="evidence" value="ECO:0007669"/>
    <property type="project" value="UniProtKB-KW"/>
</dbReference>
<dbReference type="GO" id="GO:0005525">
    <property type="term" value="F:GTP binding"/>
    <property type="evidence" value="ECO:0007669"/>
    <property type="project" value="UniProtKB-KW"/>
</dbReference>
<dbReference type="GO" id="GO:0003924">
    <property type="term" value="F:GTPase activity"/>
    <property type="evidence" value="ECO:0007669"/>
    <property type="project" value="InterPro"/>
</dbReference>
<dbReference type="GO" id="GO:0046872">
    <property type="term" value="F:metal ion binding"/>
    <property type="evidence" value="ECO:0007669"/>
    <property type="project" value="UniProtKB-KW"/>
</dbReference>
<dbReference type="GO" id="GO:0005200">
    <property type="term" value="F:structural constituent of cytoskeleton"/>
    <property type="evidence" value="ECO:0007669"/>
    <property type="project" value="InterPro"/>
</dbReference>
<dbReference type="GO" id="GO:0007017">
    <property type="term" value="P:microtubule-based process"/>
    <property type="evidence" value="ECO:0007669"/>
    <property type="project" value="InterPro"/>
</dbReference>
<dbReference type="CDD" id="cd02187">
    <property type="entry name" value="beta_tubulin"/>
    <property type="match status" value="1"/>
</dbReference>
<dbReference type="FunFam" id="1.10.287.600:FF:000002">
    <property type="entry name" value="Tubulin beta chain"/>
    <property type="match status" value="1"/>
</dbReference>
<dbReference type="FunFam" id="3.30.1330.20:FF:000002">
    <property type="entry name" value="Tubulin beta chain"/>
    <property type="match status" value="1"/>
</dbReference>
<dbReference type="FunFam" id="3.40.50.1440:FF:000005">
    <property type="entry name" value="Tubulin beta chain"/>
    <property type="match status" value="1"/>
</dbReference>
<dbReference type="Gene3D" id="1.10.287.600">
    <property type="entry name" value="Helix hairpin bin"/>
    <property type="match status" value="1"/>
</dbReference>
<dbReference type="Gene3D" id="3.30.1330.20">
    <property type="entry name" value="Tubulin/FtsZ, C-terminal domain"/>
    <property type="match status" value="1"/>
</dbReference>
<dbReference type="Gene3D" id="3.40.50.1440">
    <property type="entry name" value="Tubulin/FtsZ, GTPase domain"/>
    <property type="match status" value="1"/>
</dbReference>
<dbReference type="InterPro" id="IPR013838">
    <property type="entry name" value="Beta-tubulin_BS"/>
</dbReference>
<dbReference type="InterPro" id="IPR002453">
    <property type="entry name" value="Beta_tubulin"/>
</dbReference>
<dbReference type="InterPro" id="IPR008280">
    <property type="entry name" value="Tub_FtsZ_C"/>
</dbReference>
<dbReference type="InterPro" id="IPR000217">
    <property type="entry name" value="Tubulin"/>
</dbReference>
<dbReference type="InterPro" id="IPR037103">
    <property type="entry name" value="Tubulin/FtsZ-like_C"/>
</dbReference>
<dbReference type="InterPro" id="IPR018316">
    <property type="entry name" value="Tubulin/FtsZ_2-layer-sand-dom"/>
</dbReference>
<dbReference type="InterPro" id="IPR036525">
    <property type="entry name" value="Tubulin/FtsZ_GTPase_sf"/>
</dbReference>
<dbReference type="InterPro" id="IPR023123">
    <property type="entry name" value="Tubulin_C"/>
</dbReference>
<dbReference type="InterPro" id="IPR017975">
    <property type="entry name" value="Tubulin_CS"/>
</dbReference>
<dbReference type="InterPro" id="IPR003008">
    <property type="entry name" value="Tubulin_FtsZ_GTPase"/>
</dbReference>
<dbReference type="PANTHER" id="PTHR11588">
    <property type="entry name" value="TUBULIN"/>
    <property type="match status" value="1"/>
</dbReference>
<dbReference type="Pfam" id="PF00091">
    <property type="entry name" value="Tubulin"/>
    <property type="match status" value="1"/>
</dbReference>
<dbReference type="Pfam" id="PF03953">
    <property type="entry name" value="Tubulin_C"/>
    <property type="match status" value="1"/>
</dbReference>
<dbReference type="PRINTS" id="PR01163">
    <property type="entry name" value="BETATUBULIN"/>
</dbReference>
<dbReference type="PRINTS" id="PR01161">
    <property type="entry name" value="TUBULIN"/>
</dbReference>
<dbReference type="SMART" id="SM00864">
    <property type="entry name" value="Tubulin"/>
    <property type="match status" value="1"/>
</dbReference>
<dbReference type="SMART" id="SM00865">
    <property type="entry name" value="Tubulin_C"/>
    <property type="match status" value="1"/>
</dbReference>
<dbReference type="SUPFAM" id="SSF55307">
    <property type="entry name" value="Tubulin C-terminal domain-like"/>
    <property type="match status" value="1"/>
</dbReference>
<dbReference type="SUPFAM" id="SSF52490">
    <property type="entry name" value="Tubulin nucleotide-binding domain-like"/>
    <property type="match status" value="1"/>
</dbReference>
<dbReference type="PROSITE" id="PS00227">
    <property type="entry name" value="TUBULIN"/>
    <property type="match status" value="1"/>
</dbReference>
<dbReference type="PROSITE" id="PS00228">
    <property type="entry name" value="TUBULIN_B_AUTOREG"/>
    <property type="match status" value="1"/>
</dbReference>
<name>TBB_HORVU</name>
<accession>P93176</accession>